<feature type="chain" id="PRO_1000197754" description="Putative membrane protein insertion efficiency factor">
    <location>
        <begin position="1"/>
        <end position="68"/>
    </location>
</feature>
<dbReference type="EMBL" id="CP001130">
    <property type="protein sequence ID" value="ACG57567.1"/>
    <property type="molecule type" value="Genomic_DNA"/>
</dbReference>
<dbReference type="RefSeq" id="WP_012513923.1">
    <property type="nucleotide sequence ID" value="NC_011126.1"/>
</dbReference>
<dbReference type="STRING" id="380749.HY04AAS1_0880"/>
<dbReference type="KEGG" id="hya:HY04AAS1_0880"/>
<dbReference type="eggNOG" id="COG0759">
    <property type="taxonomic scope" value="Bacteria"/>
</dbReference>
<dbReference type="HOGENOM" id="CLU_144811_6_0_0"/>
<dbReference type="OrthoDB" id="9801753at2"/>
<dbReference type="GO" id="GO:0005886">
    <property type="term" value="C:plasma membrane"/>
    <property type="evidence" value="ECO:0007669"/>
    <property type="project" value="UniProtKB-SubCell"/>
</dbReference>
<dbReference type="HAMAP" id="MF_00386">
    <property type="entry name" value="UPF0161_YidD"/>
    <property type="match status" value="1"/>
</dbReference>
<dbReference type="InterPro" id="IPR002696">
    <property type="entry name" value="Membr_insert_effic_factor_YidD"/>
</dbReference>
<dbReference type="NCBIfam" id="TIGR00278">
    <property type="entry name" value="membrane protein insertion efficiency factor YidD"/>
    <property type="match status" value="1"/>
</dbReference>
<dbReference type="PANTHER" id="PTHR33383">
    <property type="entry name" value="MEMBRANE PROTEIN INSERTION EFFICIENCY FACTOR-RELATED"/>
    <property type="match status" value="1"/>
</dbReference>
<dbReference type="PANTHER" id="PTHR33383:SF1">
    <property type="entry name" value="MEMBRANE PROTEIN INSERTION EFFICIENCY FACTOR-RELATED"/>
    <property type="match status" value="1"/>
</dbReference>
<dbReference type="Pfam" id="PF01809">
    <property type="entry name" value="YidD"/>
    <property type="match status" value="1"/>
</dbReference>
<dbReference type="SMART" id="SM01234">
    <property type="entry name" value="Haemolytic"/>
    <property type="match status" value="1"/>
</dbReference>
<comment type="function">
    <text evidence="1">Could be involved in insertion of integral membrane proteins into the membrane.</text>
</comment>
<comment type="subcellular location">
    <subcellularLocation>
        <location evidence="1">Cell inner membrane</location>
        <topology evidence="1">Peripheral membrane protein</topology>
        <orientation evidence="1">Cytoplasmic side</orientation>
    </subcellularLocation>
</comment>
<comment type="similarity">
    <text evidence="1">Belongs to the UPF0161 family.</text>
</comment>
<name>YIDD_HYDS0</name>
<protein>
    <recommendedName>
        <fullName evidence="1">Putative membrane protein insertion efficiency factor</fullName>
    </recommendedName>
</protein>
<keyword id="KW-0997">Cell inner membrane</keyword>
<keyword id="KW-1003">Cell membrane</keyword>
<keyword id="KW-0472">Membrane</keyword>
<gene>
    <name type="ordered locus">HY04AAS1_0880</name>
</gene>
<accession>B4U8V6</accession>
<proteinExistence type="inferred from homology"/>
<reference key="1">
    <citation type="journal article" date="2009" name="J. Bacteriol.">
        <title>Complete and draft genome sequences of six members of the Aquificales.</title>
        <authorList>
            <person name="Reysenbach A.-L."/>
            <person name="Hamamura N."/>
            <person name="Podar M."/>
            <person name="Griffiths E."/>
            <person name="Ferreira S."/>
            <person name="Hochstein R."/>
            <person name="Heidelberg J."/>
            <person name="Johnson J."/>
            <person name="Mead D."/>
            <person name="Pohorille A."/>
            <person name="Sarmiento M."/>
            <person name="Schweighofer K."/>
            <person name="Seshadri R."/>
            <person name="Voytek M.A."/>
        </authorList>
    </citation>
    <scope>NUCLEOTIDE SEQUENCE [LARGE SCALE GENOMIC DNA]</scope>
    <source>
        <strain>Y04AAS1</strain>
    </source>
</reference>
<organism>
    <name type="scientific">Hydrogenobaculum sp. (strain Y04AAS1)</name>
    <dbReference type="NCBI Taxonomy" id="380749"/>
    <lineage>
        <taxon>Bacteria</taxon>
        <taxon>Pseudomonadati</taxon>
        <taxon>Aquificota</taxon>
        <taxon>Aquificia</taxon>
        <taxon>Aquificales</taxon>
        <taxon>Aquificaceae</taxon>
        <taxon>Hydrogenobaculum</taxon>
    </lineage>
</organism>
<sequence>MKYLLIKFVRFWQICISPLYPSSCRFYPTCSHYAILSIEKYGAFKGGMKAFWRILRCNPWNKGGIDYP</sequence>
<evidence type="ECO:0000255" key="1">
    <source>
        <dbReference type="HAMAP-Rule" id="MF_00386"/>
    </source>
</evidence>